<accession>P0A9P7</accession>
<accession>P23304</accession>
<accession>Q8FD90</accession>
<name>DEAD_ECOL6</name>
<sequence>MAEFETTFADLGLKAPILEALNDLGYEKPSPIQAECIPHLLNGRDVLGMAQTGSGKTAAFSLPLLQNLDPELKAPQILVLAPTRELAVQVAEAMTDFSKHMRGVNVVALYGGQRYDVQLRALRQGPQIVVGTPGRLLDHLKRGTLDLSKLSGLVLDEADEMLRMGFIEDVETIMAQIPEGHQTALFSATMPEAIRRITRRFMKEPQEVRIQSSVTTRPDISQSYWTVWGMRKNEALVRFLEAEDFDAAIIFVRTKNATLEVAEALERNGYNSAALNGDMNQALREQTLERLKDGRLDILIATDVAARGLDVERISLVVNYDIPMDSESYVHRIGRTGRAGRAGRALLFVENRERRLLRNIERTMKLTIPEVELPNAELLGKRRLEKFAAKVQQQLESSDLDQYRALLSKIQPTAEGEELDLETLAAALLKMAQGERTLIVPPDAPMRPKREFRDRDDRGPRDRNDRGPRGDREDRPRRERRDVGDMQLYRIEVGRDDGVEVRHIVGAIANEGDISSRYIGNIKLFASHSTIELPKGMPGEVLQHFTRTRILNKPMNMQLLGDAQPHTGGERRGGGRGFGGERREGGRNFSGERREGGRGDGRRFSGERREGRAPRRDDSTGRRRFGGDA</sequence>
<organism>
    <name type="scientific">Escherichia coli O6:H1 (strain CFT073 / ATCC 700928 / UPEC)</name>
    <dbReference type="NCBI Taxonomy" id="199310"/>
    <lineage>
        <taxon>Bacteria</taxon>
        <taxon>Pseudomonadati</taxon>
        <taxon>Pseudomonadota</taxon>
        <taxon>Gammaproteobacteria</taxon>
        <taxon>Enterobacterales</taxon>
        <taxon>Enterobacteriaceae</taxon>
        <taxon>Escherichia</taxon>
    </lineage>
</organism>
<feature type="initiator methionine" description="Removed" evidence="1">
    <location>
        <position position="1"/>
    </location>
</feature>
<feature type="chain" id="PRO_0000055103" description="ATP-dependent RNA helicase DeaD">
    <location>
        <begin position="2"/>
        <end position="629"/>
    </location>
</feature>
<feature type="domain" description="Helicase ATP-binding" evidence="2">
    <location>
        <begin position="37"/>
        <end position="208"/>
    </location>
</feature>
<feature type="domain" description="Helicase C-terminal" evidence="2">
    <location>
        <begin position="232"/>
        <end position="379"/>
    </location>
</feature>
<feature type="region of interest" description="Disordered" evidence="3">
    <location>
        <begin position="438"/>
        <end position="481"/>
    </location>
</feature>
<feature type="region of interest" description="Disordered" evidence="3">
    <location>
        <begin position="560"/>
        <end position="629"/>
    </location>
</feature>
<feature type="short sequence motif" description="Q motif">
    <location>
        <begin position="6"/>
        <end position="34"/>
    </location>
</feature>
<feature type="short sequence motif" description="DEAD box">
    <location>
        <begin position="156"/>
        <end position="159"/>
    </location>
</feature>
<feature type="compositionally biased region" description="Basic and acidic residues" evidence="3">
    <location>
        <begin position="446"/>
        <end position="481"/>
    </location>
</feature>
<feature type="compositionally biased region" description="Basic and acidic residues" evidence="3">
    <location>
        <begin position="568"/>
        <end position="629"/>
    </location>
</feature>
<feature type="binding site" evidence="2">
    <location>
        <begin position="50"/>
        <end position="57"/>
    </location>
    <ligand>
        <name>ATP</name>
        <dbReference type="ChEBI" id="CHEBI:30616"/>
    </ligand>
</feature>
<reference key="1">
    <citation type="journal article" date="2002" name="Proc. Natl. Acad. Sci. U.S.A.">
        <title>Extensive mosaic structure revealed by the complete genome sequence of uropathogenic Escherichia coli.</title>
        <authorList>
            <person name="Welch R.A."/>
            <person name="Burland V."/>
            <person name="Plunkett G. III"/>
            <person name="Redford P."/>
            <person name="Roesch P."/>
            <person name="Rasko D."/>
            <person name="Buckles E.L."/>
            <person name="Liou S.-R."/>
            <person name="Boutin A."/>
            <person name="Hackett J."/>
            <person name="Stroud D."/>
            <person name="Mayhew G.F."/>
            <person name="Rose D.J."/>
            <person name="Zhou S."/>
            <person name="Schwartz D.C."/>
            <person name="Perna N.T."/>
            <person name="Mobley H.L.T."/>
            <person name="Donnenberg M.S."/>
            <person name="Blattner F.R."/>
        </authorList>
    </citation>
    <scope>NUCLEOTIDE SEQUENCE [LARGE SCALE GENOMIC DNA]</scope>
    <source>
        <strain>CFT073 / ATCC 700928 / UPEC</strain>
    </source>
</reference>
<proteinExistence type="inferred from homology"/>
<keyword id="KW-0067">ATP-binding</keyword>
<keyword id="KW-0963">Cytoplasm</keyword>
<keyword id="KW-0347">Helicase</keyword>
<keyword id="KW-0378">Hydrolase</keyword>
<keyword id="KW-0547">Nucleotide-binding</keyword>
<keyword id="KW-1185">Reference proteome</keyword>
<keyword id="KW-0694">RNA-binding</keyword>
<keyword id="KW-0346">Stress response</keyword>
<protein>
    <recommendedName>
        <fullName evidence="2">ATP-dependent RNA helicase DeaD</fullName>
        <ecNumber evidence="2">3.6.4.13</ecNumber>
    </recommendedName>
    <alternativeName>
        <fullName evidence="2">Cold-shock DEAD box protein A</fullName>
    </alternativeName>
</protein>
<dbReference type="EC" id="3.6.4.13" evidence="2"/>
<dbReference type="EMBL" id="AE014075">
    <property type="protein sequence ID" value="AAN82357.1"/>
    <property type="status" value="ALT_INIT"/>
    <property type="molecule type" value="Genomic_DNA"/>
</dbReference>
<dbReference type="RefSeq" id="WP_001295553.1">
    <property type="nucleotide sequence ID" value="NZ_CP051263.1"/>
</dbReference>
<dbReference type="SMR" id="P0A9P7"/>
<dbReference type="STRING" id="199310.c3916"/>
<dbReference type="GeneID" id="93778822"/>
<dbReference type="KEGG" id="ecc:c3916"/>
<dbReference type="eggNOG" id="COG0513">
    <property type="taxonomic scope" value="Bacteria"/>
</dbReference>
<dbReference type="HOGENOM" id="CLU_003041_21_1_6"/>
<dbReference type="Proteomes" id="UP000001410">
    <property type="component" value="Chromosome"/>
</dbReference>
<dbReference type="GO" id="GO:0005829">
    <property type="term" value="C:cytosol"/>
    <property type="evidence" value="ECO:0007669"/>
    <property type="project" value="TreeGrafter"/>
</dbReference>
<dbReference type="GO" id="GO:0005840">
    <property type="term" value="C:ribosome"/>
    <property type="evidence" value="ECO:0007669"/>
    <property type="project" value="TreeGrafter"/>
</dbReference>
<dbReference type="GO" id="GO:0005524">
    <property type="term" value="F:ATP binding"/>
    <property type="evidence" value="ECO:0007669"/>
    <property type="project" value="UniProtKB-UniRule"/>
</dbReference>
<dbReference type="GO" id="GO:0016887">
    <property type="term" value="F:ATP hydrolysis activity"/>
    <property type="evidence" value="ECO:0007669"/>
    <property type="project" value="RHEA"/>
</dbReference>
<dbReference type="GO" id="GO:0003724">
    <property type="term" value="F:RNA helicase activity"/>
    <property type="evidence" value="ECO:0007669"/>
    <property type="project" value="UniProtKB-UniRule"/>
</dbReference>
<dbReference type="GO" id="GO:0033592">
    <property type="term" value="F:RNA strand annealing activity"/>
    <property type="evidence" value="ECO:0007669"/>
    <property type="project" value="TreeGrafter"/>
</dbReference>
<dbReference type="GO" id="GO:0070417">
    <property type="term" value="P:cellular response to cold"/>
    <property type="evidence" value="ECO:0007669"/>
    <property type="project" value="InterPro"/>
</dbReference>
<dbReference type="GO" id="GO:0000027">
    <property type="term" value="P:ribosomal large subunit assembly"/>
    <property type="evidence" value="ECO:0007669"/>
    <property type="project" value="UniProtKB-UniRule"/>
</dbReference>
<dbReference type="GO" id="GO:0006401">
    <property type="term" value="P:RNA catabolic process"/>
    <property type="evidence" value="ECO:0007669"/>
    <property type="project" value="UniProtKB-UniRule"/>
</dbReference>
<dbReference type="CDD" id="cd00268">
    <property type="entry name" value="DEADc"/>
    <property type="match status" value="1"/>
</dbReference>
<dbReference type="CDD" id="cd12499">
    <property type="entry name" value="RRM_EcCsdA_like"/>
    <property type="match status" value="1"/>
</dbReference>
<dbReference type="CDD" id="cd18787">
    <property type="entry name" value="SF2_C_DEAD"/>
    <property type="match status" value="1"/>
</dbReference>
<dbReference type="FunFam" id="3.30.70.330:FF:000068">
    <property type="entry name" value="ATP-dependent RNA helicase DeaD"/>
    <property type="match status" value="1"/>
</dbReference>
<dbReference type="FunFam" id="3.40.50.300:FF:000374">
    <property type="entry name" value="ATP-dependent RNA helicase DeaD"/>
    <property type="match status" value="1"/>
</dbReference>
<dbReference type="FunFam" id="3.40.50.300:FF:000108">
    <property type="entry name" value="ATP-dependent RNA helicase RhlE"/>
    <property type="match status" value="1"/>
</dbReference>
<dbReference type="Gene3D" id="3.30.70.330">
    <property type="match status" value="1"/>
</dbReference>
<dbReference type="Gene3D" id="3.40.50.300">
    <property type="entry name" value="P-loop containing nucleotide triphosphate hydrolases"/>
    <property type="match status" value="2"/>
</dbReference>
<dbReference type="HAMAP" id="MF_00964">
    <property type="entry name" value="DEAD_helicase_DeaD"/>
    <property type="match status" value="1"/>
</dbReference>
<dbReference type="InterPro" id="IPR021046">
    <property type="entry name" value="Cold-shock_DEAD_Abox_C"/>
</dbReference>
<dbReference type="InterPro" id="IPR034415">
    <property type="entry name" value="CsdA_RRM"/>
</dbReference>
<dbReference type="InterPro" id="IPR005580">
    <property type="entry name" value="DbpA/CsdA_RNA-bd_dom"/>
</dbReference>
<dbReference type="InterPro" id="IPR011545">
    <property type="entry name" value="DEAD/DEAH_box_helicase_dom"/>
</dbReference>
<dbReference type="InterPro" id="IPR050547">
    <property type="entry name" value="DEAD_box_RNA_helicases"/>
</dbReference>
<dbReference type="InterPro" id="IPR028618">
    <property type="entry name" value="DEAD_helicase_DeaD"/>
</dbReference>
<dbReference type="InterPro" id="IPR014001">
    <property type="entry name" value="Helicase_ATP-bd"/>
</dbReference>
<dbReference type="InterPro" id="IPR001650">
    <property type="entry name" value="Helicase_C-like"/>
</dbReference>
<dbReference type="InterPro" id="IPR012677">
    <property type="entry name" value="Nucleotide-bd_a/b_plait_sf"/>
</dbReference>
<dbReference type="InterPro" id="IPR027417">
    <property type="entry name" value="P-loop_NTPase"/>
</dbReference>
<dbReference type="InterPro" id="IPR000629">
    <property type="entry name" value="RNA-helicase_DEAD-box_CS"/>
</dbReference>
<dbReference type="InterPro" id="IPR014014">
    <property type="entry name" value="RNA_helicase_DEAD_Q_motif"/>
</dbReference>
<dbReference type="NCBIfam" id="NF008642">
    <property type="entry name" value="PRK11634.1"/>
    <property type="match status" value="1"/>
</dbReference>
<dbReference type="PANTHER" id="PTHR47963:SF8">
    <property type="entry name" value="ATP-DEPENDENT RNA HELICASE DEAD"/>
    <property type="match status" value="1"/>
</dbReference>
<dbReference type="PANTHER" id="PTHR47963">
    <property type="entry name" value="DEAD-BOX ATP-DEPENDENT RNA HELICASE 47, MITOCHONDRIAL"/>
    <property type="match status" value="1"/>
</dbReference>
<dbReference type="Pfam" id="PF03880">
    <property type="entry name" value="DbpA"/>
    <property type="match status" value="1"/>
</dbReference>
<dbReference type="Pfam" id="PF00270">
    <property type="entry name" value="DEAD"/>
    <property type="match status" value="1"/>
</dbReference>
<dbReference type="Pfam" id="PF12343">
    <property type="entry name" value="DeaD_C"/>
    <property type="match status" value="1"/>
</dbReference>
<dbReference type="Pfam" id="PF25399">
    <property type="entry name" value="DeaD_dimer"/>
    <property type="match status" value="1"/>
</dbReference>
<dbReference type="Pfam" id="PF00271">
    <property type="entry name" value="Helicase_C"/>
    <property type="match status" value="1"/>
</dbReference>
<dbReference type="SMART" id="SM00487">
    <property type="entry name" value="DEXDc"/>
    <property type="match status" value="1"/>
</dbReference>
<dbReference type="SMART" id="SM00490">
    <property type="entry name" value="HELICc"/>
    <property type="match status" value="1"/>
</dbReference>
<dbReference type="SUPFAM" id="SSF52540">
    <property type="entry name" value="P-loop containing nucleoside triphosphate hydrolases"/>
    <property type="match status" value="1"/>
</dbReference>
<dbReference type="PROSITE" id="PS00039">
    <property type="entry name" value="DEAD_ATP_HELICASE"/>
    <property type="match status" value="1"/>
</dbReference>
<dbReference type="PROSITE" id="PS51192">
    <property type="entry name" value="HELICASE_ATP_BIND_1"/>
    <property type="match status" value="1"/>
</dbReference>
<dbReference type="PROSITE" id="PS51194">
    <property type="entry name" value="HELICASE_CTER"/>
    <property type="match status" value="1"/>
</dbReference>
<dbReference type="PROSITE" id="PS51195">
    <property type="entry name" value="Q_MOTIF"/>
    <property type="match status" value="1"/>
</dbReference>
<comment type="function">
    <text evidence="2">DEAD-box RNA helicase involved in various cellular processes at low temperature, including ribosome biogenesis, mRNA degradation and translation initiation.</text>
</comment>
<comment type="catalytic activity">
    <reaction evidence="2">
        <text>ATP + H2O = ADP + phosphate + H(+)</text>
        <dbReference type="Rhea" id="RHEA:13065"/>
        <dbReference type="ChEBI" id="CHEBI:15377"/>
        <dbReference type="ChEBI" id="CHEBI:15378"/>
        <dbReference type="ChEBI" id="CHEBI:30616"/>
        <dbReference type="ChEBI" id="CHEBI:43474"/>
        <dbReference type="ChEBI" id="CHEBI:456216"/>
        <dbReference type="EC" id="3.6.4.13"/>
    </reaction>
</comment>
<comment type="subcellular location">
    <subcellularLocation>
        <location evidence="2">Cytoplasm</location>
    </subcellularLocation>
</comment>
<comment type="similarity">
    <text evidence="2">Belongs to the DEAD box helicase family. DeaD/CsdA subfamily.</text>
</comment>
<comment type="sequence caution" evidence="4">
    <conflict type="erroneous initiation">
        <sequence resource="EMBL-CDS" id="AAN82357"/>
    </conflict>
</comment>
<evidence type="ECO:0000250" key="1"/>
<evidence type="ECO:0000255" key="2">
    <source>
        <dbReference type="HAMAP-Rule" id="MF_00964"/>
    </source>
</evidence>
<evidence type="ECO:0000256" key="3">
    <source>
        <dbReference type="SAM" id="MobiDB-lite"/>
    </source>
</evidence>
<evidence type="ECO:0000305" key="4"/>
<gene>
    <name evidence="2" type="primary">deaD</name>
    <name evidence="2" type="synonym">csdA</name>
    <name type="ordered locus">c3916</name>
</gene>